<organism>
    <name type="scientific">Streptococcus pneumoniae serotype 4 (strain ATCC BAA-334 / TIGR4)</name>
    <dbReference type="NCBI Taxonomy" id="170187"/>
    <lineage>
        <taxon>Bacteria</taxon>
        <taxon>Bacillati</taxon>
        <taxon>Bacillota</taxon>
        <taxon>Bacilli</taxon>
        <taxon>Lactobacillales</taxon>
        <taxon>Streptococcaceae</taxon>
        <taxon>Streptococcus</taxon>
    </lineage>
</organism>
<protein>
    <recommendedName>
        <fullName>Putative ABC transporter ATP-binding protein SP_0483</fullName>
        <ecNumber>7.-.-.-</ecNumber>
    </recommendedName>
</protein>
<reference key="1">
    <citation type="journal article" date="2001" name="Science">
        <title>Complete genome sequence of a virulent isolate of Streptococcus pneumoniae.</title>
        <authorList>
            <person name="Tettelin H."/>
            <person name="Nelson K.E."/>
            <person name="Paulsen I.T."/>
            <person name="Eisen J.A."/>
            <person name="Read T.D."/>
            <person name="Peterson S.N."/>
            <person name="Heidelberg J.F."/>
            <person name="DeBoy R.T."/>
            <person name="Haft D.H."/>
            <person name="Dodson R.J."/>
            <person name="Durkin A.S."/>
            <person name="Gwinn M.L."/>
            <person name="Kolonay J.F."/>
            <person name="Nelson W.C."/>
            <person name="Peterson J.D."/>
            <person name="Umayam L.A."/>
            <person name="White O."/>
            <person name="Salzberg S.L."/>
            <person name="Lewis M.R."/>
            <person name="Radune D."/>
            <person name="Holtzapple E.K."/>
            <person name="Khouri H.M."/>
            <person name="Wolf A.M."/>
            <person name="Utterback T.R."/>
            <person name="Hansen C.L."/>
            <person name="McDonald L.A."/>
            <person name="Feldblyum T.V."/>
            <person name="Angiuoli S.V."/>
            <person name="Dickinson T."/>
            <person name="Hickey E.K."/>
            <person name="Holt I.E."/>
            <person name="Loftus B.J."/>
            <person name="Yang F."/>
            <person name="Smith H.O."/>
            <person name="Venter J.C."/>
            <person name="Dougherty B.A."/>
            <person name="Morrison D.A."/>
            <person name="Hollingshead S.K."/>
            <person name="Fraser C.M."/>
        </authorList>
    </citation>
    <scope>NUCLEOTIDE SEQUENCE [LARGE SCALE GENOMIC DNA]</scope>
    <source>
        <strain>ATCC BAA-334 / TIGR4</strain>
    </source>
</reference>
<proteinExistence type="inferred from homology"/>
<evidence type="ECO:0000250" key="1"/>
<evidence type="ECO:0000255" key="2">
    <source>
        <dbReference type="PROSITE-ProRule" id="PRU00434"/>
    </source>
</evidence>
<evidence type="ECO:0000305" key="3"/>
<keyword id="KW-0067">ATP-binding</keyword>
<keyword id="KW-1003">Cell membrane</keyword>
<keyword id="KW-0472">Membrane</keyword>
<keyword id="KW-0547">Nucleotide-binding</keyword>
<keyword id="KW-1185">Reference proteome</keyword>
<keyword id="KW-0677">Repeat</keyword>
<keyword id="KW-1278">Translocase</keyword>
<keyword id="KW-0813">Transport</keyword>
<accession>Q97SA3</accession>
<name>Y483_STRPN</name>
<feature type="chain" id="PRO_0000092100" description="Putative ABC transporter ATP-binding protein SP_0483">
    <location>
        <begin position="1"/>
        <end position="560"/>
    </location>
</feature>
<feature type="domain" description="ABC transporter 1" evidence="2">
    <location>
        <begin position="6"/>
        <end position="247"/>
    </location>
</feature>
<feature type="domain" description="ABC transporter 2" evidence="2">
    <location>
        <begin position="297"/>
        <end position="528"/>
    </location>
</feature>
<feature type="binding site" evidence="2">
    <location>
        <begin position="40"/>
        <end position="47"/>
    </location>
    <ligand>
        <name>ATP</name>
        <dbReference type="ChEBI" id="CHEBI:30616"/>
        <label>1</label>
    </ligand>
</feature>
<feature type="binding site" evidence="2">
    <location>
        <begin position="329"/>
        <end position="336"/>
    </location>
    <ligand>
        <name>ATP</name>
        <dbReference type="ChEBI" id="CHEBI:30616"/>
        <label>2</label>
    </ligand>
</feature>
<sequence length="560" mass="62873">MKEAIIEWKDFSFRYETQQEPTLQGIDLTIYKGEKVLIVGPSGSGKSTLGQCLNGIIPNIYKGQTYGEFLIKGQVAFDMSIYDKSHLVSTVLQDTDGQFIGLSVAEDLAFALENDVTALDEMKGRVYKWAEKLDLLPLLDQRPQDLSGGQKQRVSLAGVLIDESPILLFDEPLANLDPKSGQDIIELIDQIHKEEGTTTLIIEHRLEDVLHRPVDRIVLINDGRILFNGSPDQLLATDLLTQNGIREPLYLTTLRQLGVDLVKEEQLANLDNLSISKGQVQLQNELAKETPALQSLFRLEEVSFSYDDRPILKSLHLDIKKGEKIAIVGKNGAGKSTLAKAISSFIQTEGRYLWEKQDIKGDSVAERAERVGYVLQNPNQMISTNMIFDEVALGLRLRGVDEKEIETRVYETLKICGLYEFRNWPISALSFGQKKRVTIASILVLGAEIILLDEPTAGQDQKNYTEIMEFLEELHQKGHTIVMITHDMQLMLDYSDRVLVMVDGELIADTVPASLLSDPELLVKANLKETSIFNLAKKLDVDPLDLTAFYKERREGCKLN</sequence>
<gene>
    <name type="ordered locus">SP_0483</name>
</gene>
<comment type="function">
    <text evidence="1">Probably part of an ABC transporter complex. Responsible for energy coupling to the transport system (By similarity).</text>
</comment>
<comment type="subcellular location">
    <subcellularLocation>
        <location evidence="1">Cell membrane</location>
        <topology evidence="1">Peripheral membrane protein</topology>
    </subcellularLocation>
</comment>
<comment type="similarity">
    <text evidence="3">Belongs to the ABC transporter superfamily.</text>
</comment>
<dbReference type="EC" id="7.-.-.-"/>
<dbReference type="EMBL" id="AE005672">
    <property type="protein sequence ID" value="AAK74642.1"/>
    <property type="molecule type" value="Genomic_DNA"/>
</dbReference>
<dbReference type="PIR" id="A95056">
    <property type="entry name" value="A95056"/>
</dbReference>
<dbReference type="RefSeq" id="WP_000656548.1">
    <property type="nucleotide sequence ID" value="NZ_CP155539.1"/>
</dbReference>
<dbReference type="SMR" id="Q97SA3"/>
<dbReference type="PaxDb" id="170187-SP_0483"/>
<dbReference type="EnsemblBacteria" id="AAK74642">
    <property type="protein sequence ID" value="AAK74642"/>
    <property type="gene ID" value="SP_0483"/>
</dbReference>
<dbReference type="KEGG" id="spn:SP_0483"/>
<dbReference type="eggNOG" id="COG1122">
    <property type="taxonomic scope" value="Bacteria"/>
</dbReference>
<dbReference type="PhylomeDB" id="Q97SA3"/>
<dbReference type="BioCyc" id="SPNE170187:G1FZB-501-MONOMER"/>
<dbReference type="Proteomes" id="UP000000585">
    <property type="component" value="Chromosome"/>
</dbReference>
<dbReference type="GO" id="GO:0043190">
    <property type="term" value="C:ATP-binding cassette (ABC) transporter complex"/>
    <property type="evidence" value="ECO:0007669"/>
    <property type="project" value="TreeGrafter"/>
</dbReference>
<dbReference type="GO" id="GO:0005524">
    <property type="term" value="F:ATP binding"/>
    <property type="evidence" value="ECO:0007669"/>
    <property type="project" value="UniProtKB-KW"/>
</dbReference>
<dbReference type="GO" id="GO:0016887">
    <property type="term" value="F:ATP hydrolysis activity"/>
    <property type="evidence" value="ECO:0007669"/>
    <property type="project" value="InterPro"/>
</dbReference>
<dbReference type="GO" id="GO:0042626">
    <property type="term" value="F:ATPase-coupled transmembrane transporter activity"/>
    <property type="evidence" value="ECO:0007669"/>
    <property type="project" value="TreeGrafter"/>
</dbReference>
<dbReference type="CDD" id="cd03225">
    <property type="entry name" value="ABC_cobalt_CbiO_domain1"/>
    <property type="match status" value="2"/>
</dbReference>
<dbReference type="FunFam" id="3.40.50.300:FF:001422">
    <property type="entry name" value="Cobalt ABC transporter ATP-binding protein"/>
    <property type="match status" value="1"/>
</dbReference>
<dbReference type="FunFam" id="3.40.50.300:FF:000224">
    <property type="entry name" value="Energy-coupling factor transporter ATP-binding protein EcfA"/>
    <property type="match status" value="1"/>
</dbReference>
<dbReference type="Gene3D" id="3.40.50.300">
    <property type="entry name" value="P-loop containing nucleotide triphosphate hydrolases"/>
    <property type="match status" value="2"/>
</dbReference>
<dbReference type="InterPro" id="IPR003593">
    <property type="entry name" value="AAA+_ATPase"/>
</dbReference>
<dbReference type="InterPro" id="IPR022216">
    <property type="entry name" value="ABC_Co_transporter"/>
</dbReference>
<dbReference type="InterPro" id="IPR003439">
    <property type="entry name" value="ABC_transporter-like_ATP-bd"/>
</dbReference>
<dbReference type="InterPro" id="IPR017871">
    <property type="entry name" value="ABC_transporter-like_CS"/>
</dbReference>
<dbReference type="InterPro" id="IPR015856">
    <property type="entry name" value="ABC_transpr_CbiO/EcfA_su"/>
</dbReference>
<dbReference type="InterPro" id="IPR050095">
    <property type="entry name" value="ECF_ABC_transporter_ATP-bd"/>
</dbReference>
<dbReference type="InterPro" id="IPR027417">
    <property type="entry name" value="P-loop_NTPase"/>
</dbReference>
<dbReference type="NCBIfam" id="NF010167">
    <property type="entry name" value="PRK13648.1"/>
    <property type="match status" value="2"/>
</dbReference>
<dbReference type="PANTHER" id="PTHR43553:SF26">
    <property type="entry name" value="ABC TRANSPORTER ATP-BINDING PROTEIN BC_2655-RELATED"/>
    <property type="match status" value="1"/>
</dbReference>
<dbReference type="PANTHER" id="PTHR43553">
    <property type="entry name" value="HEAVY METAL TRANSPORTER"/>
    <property type="match status" value="1"/>
</dbReference>
<dbReference type="Pfam" id="PF00005">
    <property type="entry name" value="ABC_tran"/>
    <property type="match status" value="2"/>
</dbReference>
<dbReference type="Pfam" id="PF12558">
    <property type="entry name" value="DUF3744"/>
    <property type="match status" value="1"/>
</dbReference>
<dbReference type="SMART" id="SM00382">
    <property type="entry name" value="AAA"/>
    <property type="match status" value="2"/>
</dbReference>
<dbReference type="SUPFAM" id="SSF52540">
    <property type="entry name" value="P-loop containing nucleoside triphosphate hydrolases"/>
    <property type="match status" value="2"/>
</dbReference>
<dbReference type="PROSITE" id="PS00211">
    <property type="entry name" value="ABC_TRANSPORTER_1"/>
    <property type="match status" value="2"/>
</dbReference>
<dbReference type="PROSITE" id="PS50893">
    <property type="entry name" value="ABC_TRANSPORTER_2"/>
    <property type="match status" value="2"/>
</dbReference>